<evidence type="ECO:0000250" key="1">
    <source>
        <dbReference type="UniProtKB" id="P14120"/>
    </source>
</evidence>
<evidence type="ECO:0000256" key="2">
    <source>
        <dbReference type="SAM" id="MobiDB-lite"/>
    </source>
</evidence>
<evidence type="ECO:0000269" key="3">
    <source>
    </source>
</evidence>
<evidence type="ECO:0000305" key="4"/>
<evidence type="ECO:0007829" key="5">
    <source>
        <dbReference type="PDB" id="8ETC"/>
    </source>
</evidence>
<name>RL30B_SCHPO</name>
<gene>
    <name type="primary">rpl3002</name>
    <name type="synonym">rpl30b</name>
    <name type="ORF">SPAC1250.05</name>
</gene>
<dbReference type="EMBL" id="CU329670">
    <property type="protein sequence ID" value="CAB54828.1"/>
    <property type="molecule type" value="Genomic_DNA"/>
</dbReference>
<dbReference type="PIR" id="T37557">
    <property type="entry name" value="T37557"/>
</dbReference>
<dbReference type="RefSeq" id="NP_594857.1">
    <property type="nucleotide sequence ID" value="NM_001020286.2"/>
</dbReference>
<dbReference type="PDB" id="8ESQ">
    <property type="method" value="EM"/>
    <property type="resolution" value="2.80 A"/>
    <property type="chains" value="c=1-117"/>
</dbReference>
<dbReference type="PDB" id="8ESR">
    <property type="method" value="EM"/>
    <property type="resolution" value="3.20 A"/>
    <property type="chains" value="c=1-117"/>
</dbReference>
<dbReference type="PDB" id="8ETC">
    <property type="method" value="EM"/>
    <property type="resolution" value="3.10 A"/>
    <property type="chains" value="c=1-117"/>
</dbReference>
<dbReference type="PDB" id="8ETG">
    <property type="method" value="EM"/>
    <property type="resolution" value="3.40 A"/>
    <property type="chains" value="c=1-117"/>
</dbReference>
<dbReference type="PDB" id="8EUG">
    <property type="method" value="EM"/>
    <property type="resolution" value="2.80 A"/>
    <property type="chains" value="c=1-117"/>
</dbReference>
<dbReference type="PDB" id="8EUI">
    <property type="method" value="EM"/>
    <property type="resolution" value="3.10 A"/>
    <property type="chains" value="c=1-117"/>
</dbReference>
<dbReference type="PDBsum" id="8ESQ"/>
<dbReference type="PDBsum" id="8ESR"/>
<dbReference type="PDBsum" id="8ETC"/>
<dbReference type="PDBsum" id="8ETG"/>
<dbReference type="PDBsum" id="8EUG"/>
<dbReference type="PDBsum" id="8EUI"/>
<dbReference type="SMR" id="Q9UTP0"/>
<dbReference type="BioGRID" id="279114">
    <property type="interactions" value="4"/>
</dbReference>
<dbReference type="FunCoup" id="Q9UTP0">
    <property type="interactions" value="515"/>
</dbReference>
<dbReference type="STRING" id="284812.Q9UTP0"/>
<dbReference type="iPTMnet" id="Q9UTP0"/>
<dbReference type="PaxDb" id="4896-SPAC1250.05.1"/>
<dbReference type="EnsemblFungi" id="SPAC1250.05.1">
    <property type="protein sequence ID" value="SPAC1250.05.1:pep"/>
    <property type="gene ID" value="SPAC1250.05"/>
</dbReference>
<dbReference type="GeneID" id="2542661"/>
<dbReference type="KEGG" id="spo:2542661"/>
<dbReference type="PomBase" id="SPAC1250.05">
    <property type="gene designation" value="rpl3002"/>
</dbReference>
<dbReference type="VEuPathDB" id="FungiDB:SPAC1250.05"/>
<dbReference type="eggNOG" id="KOG2988">
    <property type="taxonomic scope" value="Eukaryota"/>
</dbReference>
<dbReference type="HOGENOM" id="CLU_130502_0_1_1"/>
<dbReference type="InParanoid" id="Q9UTP0"/>
<dbReference type="OMA" id="MIANNCP"/>
<dbReference type="PhylomeDB" id="Q9UTP0"/>
<dbReference type="PRO" id="PR:Q9UTP0"/>
<dbReference type="Proteomes" id="UP000002485">
    <property type="component" value="Chromosome I"/>
</dbReference>
<dbReference type="GO" id="GO:0005829">
    <property type="term" value="C:cytosol"/>
    <property type="evidence" value="ECO:0007005"/>
    <property type="project" value="PomBase"/>
</dbReference>
<dbReference type="GO" id="GO:0022625">
    <property type="term" value="C:cytosolic large ribosomal subunit"/>
    <property type="evidence" value="ECO:0000318"/>
    <property type="project" value="GO_Central"/>
</dbReference>
<dbReference type="GO" id="GO:0030684">
    <property type="term" value="C:preribosome"/>
    <property type="evidence" value="ECO:0000314"/>
    <property type="project" value="PomBase"/>
</dbReference>
<dbReference type="GO" id="GO:0003723">
    <property type="term" value="F:RNA binding"/>
    <property type="evidence" value="ECO:0000318"/>
    <property type="project" value="GO_Central"/>
</dbReference>
<dbReference type="GO" id="GO:0003735">
    <property type="term" value="F:structural constituent of ribosome"/>
    <property type="evidence" value="ECO:0000318"/>
    <property type="project" value="GO_Central"/>
</dbReference>
<dbReference type="GO" id="GO:0002181">
    <property type="term" value="P:cytoplasmic translation"/>
    <property type="evidence" value="ECO:0000266"/>
    <property type="project" value="PomBase"/>
</dbReference>
<dbReference type="GO" id="GO:0006364">
    <property type="term" value="P:rRNA processing"/>
    <property type="evidence" value="ECO:0000266"/>
    <property type="project" value="PomBase"/>
</dbReference>
<dbReference type="FunFam" id="3.30.1330.30:FF:000001">
    <property type="entry name" value="60S ribosomal protein L30"/>
    <property type="match status" value="1"/>
</dbReference>
<dbReference type="Gene3D" id="3.30.1330.30">
    <property type="match status" value="1"/>
</dbReference>
<dbReference type="InterPro" id="IPR039109">
    <property type="entry name" value="Ribosomal_eL30-like"/>
</dbReference>
<dbReference type="InterPro" id="IPR029064">
    <property type="entry name" value="Ribosomal_eL30-like_sf"/>
</dbReference>
<dbReference type="InterPro" id="IPR022991">
    <property type="entry name" value="Ribosomal_eL30_CS"/>
</dbReference>
<dbReference type="InterPro" id="IPR004038">
    <property type="entry name" value="Ribosomal_eL8/eL30/eS12/Gad45"/>
</dbReference>
<dbReference type="NCBIfam" id="NF002172">
    <property type="entry name" value="PRK01018.1"/>
    <property type="match status" value="1"/>
</dbReference>
<dbReference type="PANTHER" id="PTHR11449">
    <property type="entry name" value="RIBOSOMAL PROTEIN L30"/>
    <property type="match status" value="1"/>
</dbReference>
<dbReference type="Pfam" id="PF01248">
    <property type="entry name" value="Ribosomal_L7Ae"/>
    <property type="match status" value="1"/>
</dbReference>
<dbReference type="SUPFAM" id="SSF55315">
    <property type="entry name" value="L30e-like"/>
    <property type="match status" value="1"/>
</dbReference>
<dbReference type="PROSITE" id="PS00709">
    <property type="entry name" value="RIBOSOMAL_L30E_1"/>
    <property type="match status" value="1"/>
</dbReference>
<dbReference type="PROSITE" id="PS00993">
    <property type="entry name" value="RIBOSOMAL_L30E_2"/>
    <property type="match status" value="1"/>
</dbReference>
<protein>
    <recommendedName>
        <fullName evidence="4">Large ribosomal subunit protein eL30B</fullName>
    </recommendedName>
    <alternativeName>
        <fullName>60S ribosomal protein L30-2</fullName>
    </alternativeName>
</protein>
<comment type="function">
    <text evidence="1">Component of the ribosome, a large ribonucleoprotein complex responsible for the synthesis of proteins in the cell. The small ribosomal subunit (SSU) binds messenger RNAs (mRNAs) and translates the encoded message by selecting cognate aminoacyl-transfer RNA (tRNA) molecules. The large subunit (LSU) contains the ribosomal catalytic site termed the peptidyl transferase center (PTC), which catalyzes the formation of peptide bonds, thereby polymerizing the amino acids delivered by tRNAs into a polypeptide chain. The nascent polypeptides leave the ribosome through a tunnel in the LSU and interact with protein factors that function in enzymatic processing, targeting, and the membrane insertion of nascent chains at the exit of the ribosomal tunnel.</text>
</comment>
<comment type="subunit">
    <text evidence="1">Component of the large ribosomal subunit (LSU). Mature yeast ribosomes consist of a small (40S) and a large (60S) subunit. The 40S small subunit contains 1 molecule of ribosomal RNA (18S rRNA) and at least 33 different proteins. The large 60S subunit contains 3 rRNA molecules (25S, 5.8S and 5S rRNA) and at least 46 different proteins.</text>
</comment>
<comment type="subcellular location">
    <subcellularLocation>
        <location evidence="3">Cytoplasm</location>
    </subcellularLocation>
</comment>
<comment type="miscellaneous">
    <text>There are 2 genes for eL30 in S.pombe.</text>
</comment>
<comment type="similarity">
    <text evidence="4">Belongs to the eukaryotic ribosomal protein eL30 family.</text>
</comment>
<feature type="chain" id="PRO_0000146141" description="Large ribosomal subunit protein eL30B">
    <location>
        <begin position="1"/>
        <end position="117"/>
    </location>
</feature>
<feature type="region of interest" description="Disordered" evidence="2">
    <location>
        <begin position="1"/>
        <end position="22"/>
    </location>
</feature>
<feature type="compositionally biased region" description="Low complexity" evidence="2">
    <location>
        <begin position="1"/>
        <end position="14"/>
    </location>
</feature>
<feature type="helix" evidence="5">
    <location>
        <begin position="22"/>
        <end position="34"/>
    </location>
</feature>
<feature type="helix" evidence="5">
    <location>
        <begin position="41"/>
        <end position="50"/>
    </location>
</feature>
<feature type="strand" evidence="5">
    <location>
        <begin position="55"/>
        <end position="59"/>
    </location>
</feature>
<feature type="helix" evidence="5">
    <location>
        <begin position="64"/>
        <end position="77"/>
    </location>
</feature>
<feature type="strand" evidence="5">
    <location>
        <begin position="80"/>
        <end position="86"/>
    </location>
</feature>
<feature type="helix" evidence="5">
    <location>
        <begin position="88"/>
        <end position="95"/>
    </location>
</feature>
<feature type="strand" evidence="5">
    <location>
        <begin position="102"/>
        <end position="107"/>
    </location>
</feature>
<feature type="turn" evidence="5">
    <location>
        <begin position="114"/>
        <end position="116"/>
    </location>
</feature>
<organism>
    <name type="scientific">Schizosaccharomyces pombe (strain 972 / ATCC 24843)</name>
    <name type="common">Fission yeast</name>
    <dbReference type="NCBI Taxonomy" id="284812"/>
    <lineage>
        <taxon>Eukaryota</taxon>
        <taxon>Fungi</taxon>
        <taxon>Dikarya</taxon>
        <taxon>Ascomycota</taxon>
        <taxon>Taphrinomycotina</taxon>
        <taxon>Schizosaccharomycetes</taxon>
        <taxon>Schizosaccharomycetales</taxon>
        <taxon>Schizosaccharomycetaceae</taxon>
        <taxon>Schizosaccharomyces</taxon>
    </lineage>
</organism>
<sequence>MSAAPTTAPVAAVSKKGKKSGDTINSKLALTMKSGKYVLGYKSTLKTLRSGKAKLILIAANAPPLRKSELEYYAMLSRCSVHHYSGNNIDLGTACGKLFRVGVLAVIDAGDSDILAA</sequence>
<reference key="1">
    <citation type="journal article" date="2002" name="Nature">
        <title>The genome sequence of Schizosaccharomyces pombe.</title>
        <authorList>
            <person name="Wood V."/>
            <person name="Gwilliam R."/>
            <person name="Rajandream M.A."/>
            <person name="Lyne M.H."/>
            <person name="Lyne R."/>
            <person name="Stewart A."/>
            <person name="Sgouros J.G."/>
            <person name="Peat N."/>
            <person name="Hayles J."/>
            <person name="Baker S.G."/>
            <person name="Basham D."/>
            <person name="Bowman S."/>
            <person name="Brooks K."/>
            <person name="Brown D."/>
            <person name="Brown S."/>
            <person name="Chillingworth T."/>
            <person name="Churcher C.M."/>
            <person name="Collins M."/>
            <person name="Connor R."/>
            <person name="Cronin A."/>
            <person name="Davis P."/>
            <person name="Feltwell T."/>
            <person name="Fraser A."/>
            <person name="Gentles S."/>
            <person name="Goble A."/>
            <person name="Hamlin N."/>
            <person name="Harris D.E."/>
            <person name="Hidalgo J."/>
            <person name="Hodgson G."/>
            <person name="Holroyd S."/>
            <person name="Hornsby T."/>
            <person name="Howarth S."/>
            <person name="Huckle E.J."/>
            <person name="Hunt S."/>
            <person name="Jagels K."/>
            <person name="James K.D."/>
            <person name="Jones L."/>
            <person name="Jones M."/>
            <person name="Leather S."/>
            <person name="McDonald S."/>
            <person name="McLean J."/>
            <person name="Mooney P."/>
            <person name="Moule S."/>
            <person name="Mungall K.L."/>
            <person name="Murphy L.D."/>
            <person name="Niblett D."/>
            <person name="Odell C."/>
            <person name="Oliver K."/>
            <person name="O'Neil S."/>
            <person name="Pearson D."/>
            <person name="Quail M.A."/>
            <person name="Rabbinowitsch E."/>
            <person name="Rutherford K.M."/>
            <person name="Rutter S."/>
            <person name="Saunders D."/>
            <person name="Seeger K."/>
            <person name="Sharp S."/>
            <person name="Skelton J."/>
            <person name="Simmonds M.N."/>
            <person name="Squares R."/>
            <person name="Squares S."/>
            <person name="Stevens K."/>
            <person name="Taylor K."/>
            <person name="Taylor R.G."/>
            <person name="Tivey A."/>
            <person name="Walsh S.V."/>
            <person name="Warren T."/>
            <person name="Whitehead S."/>
            <person name="Woodward J.R."/>
            <person name="Volckaert G."/>
            <person name="Aert R."/>
            <person name="Robben J."/>
            <person name="Grymonprez B."/>
            <person name="Weltjens I."/>
            <person name="Vanstreels E."/>
            <person name="Rieger M."/>
            <person name="Schaefer M."/>
            <person name="Mueller-Auer S."/>
            <person name="Gabel C."/>
            <person name="Fuchs M."/>
            <person name="Duesterhoeft A."/>
            <person name="Fritzc C."/>
            <person name="Holzer E."/>
            <person name="Moestl D."/>
            <person name="Hilbert H."/>
            <person name="Borzym K."/>
            <person name="Langer I."/>
            <person name="Beck A."/>
            <person name="Lehrach H."/>
            <person name="Reinhardt R."/>
            <person name="Pohl T.M."/>
            <person name="Eger P."/>
            <person name="Zimmermann W."/>
            <person name="Wedler H."/>
            <person name="Wambutt R."/>
            <person name="Purnelle B."/>
            <person name="Goffeau A."/>
            <person name="Cadieu E."/>
            <person name="Dreano S."/>
            <person name="Gloux S."/>
            <person name="Lelaure V."/>
            <person name="Mottier S."/>
            <person name="Galibert F."/>
            <person name="Aves S.J."/>
            <person name="Xiang Z."/>
            <person name="Hunt C."/>
            <person name="Moore K."/>
            <person name="Hurst S.M."/>
            <person name="Lucas M."/>
            <person name="Rochet M."/>
            <person name="Gaillardin C."/>
            <person name="Tallada V.A."/>
            <person name="Garzon A."/>
            <person name="Thode G."/>
            <person name="Daga R.R."/>
            <person name="Cruzado L."/>
            <person name="Jimenez J."/>
            <person name="Sanchez M."/>
            <person name="del Rey F."/>
            <person name="Benito J."/>
            <person name="Dominguez A."/>
            <person name="Revuelta J.L."/>
            <person name="Moreno S."/>
            <person name="Armstrong J."/>
            <person name="Forsburg S.L."/>
            <person name="Cerutti L."/>
            <person name="Lowe T."/>
            <person name="McCombie W.R."/>
            <person name="Paulsen I."/>
            <person name="Potashkin J."/>
            <person name="Shpakovski G.V."/>
            <person name="Ussery D."/>
            <person name="Barrell B.G."/>
            <person name="Nurse P."/>
        </authorList>
    </citation>
    <scope>NUCLEOTIDE SEQUENCE [LARGE SCALE GENOMIC DNA]</scope>
    <source>
        <strain>972 / ATCC 24843</strain>
    </source>
</reference>
<reference key="2">
    <citation type="journal article" date="2006" name="Nat. Biotechnol.">
        <title>ORFeome cloning and global analysis of protein localization in the fission yeast Schizosaccharomyces pombe.</title>
        <authorList>
            <person name="Matsuyama A."/>
            <person name="Arai R."/>
            <person name="Yashiroda Y."/>
            <person name="Shirai A."/>
            <person name="Kamata A."/>
            <person name="Sekido S."/>
            <person name="Kobayashi Y."/>
            <person name="Hashimoto A."/>
            <person name="Hamamoto M."/>
            <person name="Hiraoka Y."/>
            <person name="Horinouchi S."/>
            <person name="Yoshida M."/>
        </authorList>
    </citation>
    <scope>SUBCELLULAR LOCATION [LARGE SCALE ANALYSIS]</scope>
</reference>
<proteinExistence type="evidence at protein level"/>
<accession>Q9UTP0</accession>
<keyword id="KW-0002">3D-structure</keyword>
<keyword id="KW-0963">Cytoplasm</keyword>
<keyword id="KW-1185">Reference proteome</keyword>
<keyword id="KW-0687">Ribonucleoprotein</keyword>
<keyword id="KW-0689">Ribosomal protein</keyword>